<keyword id="KW-0472">Membrane</keyword>
<keyword id="KW-0539">Nucleus</keyword>
<keyword id="KW-1185">Reference proteome</keyword>
<keyword id="KW-0812">Transmembrane</keyword>
<keyword id="KW-1133">Transmembrane helix</keyword>
<protein>
    <recommendedName>
        <fullName>Nurim homolog</fullName>
    </recommendedName>
    <alternativeName>
        <fullName>Nuclear envelope membrane protein</fullName>
    </alternativeName>
    <alternativeName>
        <fullName>Nuclear rim protein</fullName>
    </alternativeName>
</protein>
<sequence length="253" mass="28570">MTSIAKSIVLLASLATFAYSLYVVGSLMMFLSTPRSISKAHTWIFNLLDNKSRLQTAYGPVVFDTLYLIGFIFQHSFLKSAVVKKLLAKLGLSGAERTIYSLTSSLCLHYLIVNWLPAQSIVLWQIDVEQSAPLWWTFVITHGICWVVIFGGSLVMDLPELLGVKQAYYDLKAYGPPISYKSGELRNLYAHVRHPSFVGLSVILFATNVMSVDRLVMALLLTTYMYLAWSTDQKDVAYQKIQLQRKKLELKAK</sequence>
<proteinExistence type="evidence at transcript level"/>
<accession>Q9VEG9</accession>
<feature type="chain" id="PRO_0000299403" description="Nurim homolog">
    <location>
        <begin position="1"/>
        <end position="253"/>
    </location>
</feature>
<feature type="topological domain" description="Nuclear" evidence="2">
    <location>
        <begin position="1"/>
        <end position="2"/>
    </location>
</feature>
<feature type="transmembrane region" description="Helical" evidence="2">
    <location>
        <begin position="3"/>
        <end position="30"/>
    </location>
</feature>
<feature type="topological domain" description="Perinuclear space" evidence="2">
    <location>
        <begin position="31"/>
        <end position="56"/>
    </location>
</feature>
<feature type="transmembrane region" description="Helical" evidence="2">
    <location>
        <begin position="57"/>
        <end position="78"/>
    </location>
</feature>
<feature type="topological domain" description="Nuclear" evidence="2">
    <location>
        <begin position="79"/>
        <end position="96"/>
    </location>
</feature>
<feature type="transmembrane region" description="Helical" evidence="2">
    <location>
        <begin position="97"/>
        <end position="113"/>
    </location>
</feature>
<feature type="topological domain" description="Perinuclear space" evidence="2">
    <location>
        <begin position="114"/>
        <end position="132"/>
    </location>
</feature>
<feature type="transmembrane region" description="Helical" evidence="2">
    <location>
        <begin position="133"/>
        <end position="161"/>
    </location>
</feature>
<feature type="topological domain" description="Nuclear" evidence="2">
    <location>
        <begin position="162"/>
        <end position="188"/>
    </location>
</feature>
<feature type="transmembrane region" description="Helical" evidence="2">
    <location>
        <begin position="189"/>
        <end position="207"/>
    </location>
</feature>
<feature type="topological domain" description="Perinuclear space" evidence="2">
    <location>
        <begin position="208"/>
        <end position="213"/>
    </location>
</feature>
<feature type="transmembrane region" description="Helical" evidence="2">
    <location>
        <begin position="214"/>
        <end position="231"/>
    </location>
</feature>
<feature type="topological domain" description="Nuclear" evidence="2">
    <location>
        <begin position="232"/>
        <end position="253"/>
    </location>
</feature>
<gene>
    <name type="primary">nrm</name>
    <name type="ORF">CG7655</name>
</gene>
<dbReference type="EMBL" id="AE014297">
    <property type="protein sequence ID" value="AAF55455.1"/>
    <property type="molecule type" value="Genomic_DNA"/>
</dbReference>
<dbReference type="EMBL" id="AY060774">
    <property type="protein sequence ID" value="AAL28322.1"/>
    <property type="molecule type" value="mRNA"/>
</dbReference>
<dbReference type="EMBL" id="BT003593">
    <property type="protein sequence ID" value="AAO39596.1"/>
    <property type="molecule type" value="mRNA"/>
</dbReference>
<dbReference type="RefSeq" id="NP_650646.1">
    <property type="nucleotide sequence ID" value="NM_142389.3"/>
</dbReference>
<dbReference type="BioGRID" id="67160">
    <property type="interactions" value="5"/>
</dbReference>
<dbReference type="FunCoup" id="Q9VEG9">
    <property type="interactions" value="701"/>
</dbReference>
<dbReference type="IntAct" id="Q9VEG9">
    <property type="interactions" value="5"/>
</dbReference>
<dbReference type="PaxDb" id="7227-FBpp0082912"/>
<dbReference type="DNASU" id="42128"/>
<dbReference type="EnsemblMetazoa" id="FBtr0083479">
    <property type="protein sequence ID" value="FBpp0082912"/>
    <property type="gene ID" value="FBgn0038536"/>
</dbReference>
<dbReference type="GeneID" id="42128"/>
<dbReference type="KEGG" id="dme:Dmel_CG7655"/>
<dbReference type="UCSC" id="CG7655-RA">
    <property type="organism name" value="d. melanogaster"/>
</dbReference>
<dbReference type="AGR" id="FB:FBgn0038536"/>
<dbReference type="FlyBase" id="FBgn0038536">
    <property type="gene designation" value="CG7655"/>
</dbReference>
<dbReference type="VEuPathDB" id="VectorBase:FBgn0038536"/>
<dbReference type="eggNOG" id="ENOG502RS62">
    <property type="taxonomic scope" value="Eukaryota"/>
</dbReference>
<dbReference type="GeneTree" id="ENSGT00390000008146"/>
<dbReference type="HOGENOM" id="CLU_083708_0_0_1"/>
<dbReference type="InParanoid" id="Q9VEG9"/>
<dbReference type="OMA" id="WSIWFPL"/>
<dbReference type="OrthoDB" id="10050858at2759"/>
<dbReference type="PhylomeDB" id="Q9VEG9"/>
<dbReference type="BioGRID-ORCS" id="42128">
    <property type="hits" value="0 hits in 1 CRISPR screen"/>
</dbReference>
<dbReference type="GenomeRNAi" id="42128"/>
<dbReference type="PRO" id="PR:Q9VEG9"/>
<dbReference type="Proteomes" id="UP000000803">
    <property type="component" value="Chromosome 3R"/>
</dbReference>
<dbReference type="Bgee" id="FBgn0038536">
    <property type="expression patterns" value="Expressed in adult enteroendocrine precursor cell in adult midgut (Drosophila) and 79 other cell types or tissues"/>
</dbReference>
<dbReference type="GO" id="GO:0005635">
    <property type="term" value="C:nuclear envelope"/>
    <property type="evidence" value="ECO:0000250"/>
    <property type="project" value="UniProtKB"/>
</dbReference>
<dbReference type="GO" id="GO:0005637">
    <property type="term" value="C:nuclear inner membrane"/>
    <property type="evidence" value="ECO:0007669"/>
    <property type="project" value="UniProtKB-SubCell"/>
</dbReference>
<dbReference type="GO" id="GO:0031965">
    <property type="term" value="C:nuclear membrane"/>
    <property type="evidence" value="ECO:0000318"/>
    <property type="project" value="GO_Central"/>
</dbReference>
<dbReference type="InterPro" id="IPR033580">
    <property type="entry name" value="Nurim-like"/>
</dbReference>
<dbReference type="PANTHER" id="PTHR31040">
    <property type="entry name" value="NURIM"/>
    <property type="match status" value="1"/>
</dbReference>
<dbReference type="PANTHER" id="PTHR31040:SF1">
    <property type="entry name" value="NURIM"/>
    <property type="match status" value="1"/>
</dbReference>
<name>NRM_DROME</name>
<evidence type="ECO:0000250" key="1"/>
<evidence type="ECO:0000255" key="2"/>
<evidence type="ECO:0000305" key="3"/>
<comment type="subcellular location">
    <subcellularLocation>
        <location evidence="1">Nucleus inner membrane</location>
        <topology evidence="1">Multi-pass membrane protein</topology>
    </subcellularLocation>
</comment>
<comment type="similarity">
    <text evidence="3">Belongs to the nurim family.</text>
</comment>
<organism>
    <name type="scientific">Drosophila melanogaster</name>
    <name type="common">Fruit fly</name>
    <dbReference type="NCBI Taxonomy" id="7227"/>
    <lineage>
        <taxon>Eukaryota</taxon>
        <taxon>Metazoa</taxon>
        <taxon>Ecdysozoa</taxon>
        <taxon>Arthropoda</taxon>
        <taxon>Hexapoda</taxon>
        <taxon>Insecta</taxon>
        <taxon>Pterygota</taxon>
        <taxon>Neoptera</taxon>
        <taxon>Endopterygota</taxon>
        <taxon>Diptera</taxon>
        <taxon>Brachycera</taxon>
        <taxon>Muscomorpha</taxon>
        <taxon>Ephydroidea</taxon>
        <taxon>Drosophilidae</taxon>
        <taxon>Drosophila</taxon>
        <taxon>Sophophora</taxon>
    </lineage>
</organism>
<reference key="1">
    <citation type="journal article" date="2000" name="Science">
        <title>The genome sequence of Drosophila melanogaster.</title>
        <authorList>
            <person name="Adams M.D."/>
            <person name="Celniker S.E."/>
            <person name="Holt R.A."/>
            <person name="Evans C.A."/>
            <person name="Gocayne J.D."/>
            <person name="Amanatides P.G."/>
            <person name="Scherer S.E."/>
            <person name="Li P.W."/>
            <person name="Hoskins R.A."/>
            <person name="Galle R.F."/>
            <person name="George R.A."/>
            <person name="Lewis S.E."/>
            <person name="Richards S."/>
            <person name="Ashburner M."/>
            <person name="Henderson S.N."/>
            <person name="Sutton G.G."/>
            <person name="Wortman J.R."/>
            <person name="Yandell M.D."/>
            <person name="Zhang Q."/>
            <person name="Chen L.X."/>
            <person name="Brandon R.C."/>
            <person name="Rogers Y.-H.C."/>
            <person name="Blazej R.G."/>
            <person name="Champe M."/>
            <person name="Pfeiffer B.D."/>
            <person name="Wan K.H."/>
            <person name="Doyle C."/>
            <person name="Baxter E.G."/>
            <person name="Helt G."/>
            <person name="Nelson C.R."/>
            <person name="Miklos G.L.G."/>
            <person name="Abril J.F."/>
            <person name="Agbayani A."/>
            <person name="An H.-J."/>
            <person name="Andrews-Pfannkoch C."/>
            <person name="Baldwin D."/>
            <person name="Ballew R.M."/>
            <person name="Basu A."/>
            <person name="Baxendale J."/>
            <person name="Bayraktaroglu L."/>
            <person name="Beasley E.M."/>
            <person name="Beeson K.Y."/>
            <person name="Benos P.V."/>
            <person name="Berman B.P."/>
            <person name="Bhandari D."/>
            <person name="Bolshakov S."/>
            <person name="Borkova D."/>
            <person name="Botchan M.R."/>
            <person name="Bouck J."/>
            <person name="Brokstein P."/>
            <person name="Brottier P."/>
            <person name="Burtis K.C."/>
            <person name="Busam D.A."/>
            <person name="Butler H."/>
            <person name="Cadieu E."/>
            <person name="Center A."/>
            <person name="Chandra I."/>
            <person name="Cherry J.M."/>
            <person name="Cawley S."/>
            <person name="Dahlke C."/>
            <person name="Davenport L.B."/>
            <person name="Davies P."/>
            <person name="de Pablos B."/>
            <person name="Delcher A."/>
            <person name="Deng Z."/>
            <person name="Mays A.D."/>
            <person name="Dew I."/>
            <person name="Dietz S.M."/>
            <person name="Dodson K."/>
            <person name="Doup L.E."/>
            <person name="Downes M."/>
            <person name="Dugan-Rocha S."/>
            <person name="Dunkov B.C."/>
            <person name="Dunn P."/>
            <person name="Durbin K.J."/>
            <person name="Evangelista C.C."/>
            <person name="Ferraz C."/>
            <person name="Ferriera S."/>
            <person name="Fleischmann W."/>
            <person name="Fosler C."/>
            <person name="Gabrielian A.E."/>
            <person name="Garg N.S."/>
            <person name="Gelbart W.M."/>
            <person name="Glasser K."/>
            <person name="Glodek A."/>
            <person name="Gong F."/>
            <person name="Gorrell J.H."/>
            <person name="Gu Z."/>
            <person name="Guan P."/>
            <person name="Harris M."/>
            <person name="Harris N.L."/>
            <person name="Harvey D.A."/>
            <person name="Heiman T.J."/>
            <person name="Hernandez J.R."/>
            <person name="Houck J."/>
            <person name="Hostin D."/>
            <person name="Houston K.A."/>
            <person name="Howland T.J."/>
            <person name="Wei M.-H."/>
            <person name="Ibegwam C."/>
            <person name="Jalali M."/>
            <person name="Kalush F."/>
            <person name="Karpen G.H."/>
            <person name="Ke Z."/>
            <person name="Kennison J.A."/>
            <person name="Ketchum K.A."/>
            <person name="Kimmel B.E."/>
            <person name="Kodira C.D."/>
            <person name="Kraft C.L."/>
            <person name="Kravitz S."/>
            <person name="Kulp D."/>
            <person name="Lai Z."/>
            <person name="Lasko P."/>
            <person name="Lei Y."/>
            <person name="Levitsky A.A."/>
            <person name="Li J.H."/>
            <person name="Li Z."/>
            <person name="Liang Y."/>
            <person name="Lin X."/>
            <person name="Liu X."/>
            <person name="Mattei B."/>
            <person name="McIntosh T.C."/>
            <person name="McLeod M.P."/>
            <person name="McPherson D."/>
            <person name="Merkulov G."/>
            <person name="Milshina N.V."/>
            <person name="Mobarry C."/>
            <person name="Morris J."/>
            <person name="Moshrefi A."/>
            <person name="Mount S.M."/>
            <person name="Moy M."/>
            <person name="Murphy B."/>
            <person name="Murphy L."/>
            <person name="Muzny D.M."/>
            <person name="Nelson D.L."/>
            <person name="Nelson D.R."/>
            <person name="Nelson K.A."/>
            <person name="Nixon K."/>
            <person name="Nusskern D.R."/>
            <person name="Pacleb J.M."/>
            <person name="Palazzolo M."/>
            <person name="Pittman G.S."/>
            <person name="Pan S."/>
            <person name="Pollard J."/>
            <person name="Puri V."/>
            <person name="Reese M.G."/>
            <person name="Reinert K."/>
            <person name="Remington K."/>
            <person name="Saunders R.D.C."/>
            <person name="Scheeler F."/>
            <person name="Shen H."/>
            <person name="Shue B.C."/>
            <person name="Siden-Kiamos I."/>
            <person name="Simpson M."/>
            <person name="Skupski M.P."/>
            <person name="Smith T.J."/>
            <person name="Spier E."/>
            <person name="Spradling A.C."/>
            <person name="Stapleton M."/>
            <person name="Strong R."/>
            <person name="Sun E."/>
            <person name="Svirskas R."/>
            <person name="Tector C."/>
            <person name="Turner R."/>
            <person name="Venter E."/>
            <person name="Wang A.H."/>
            <person name="Wang X."/>
            <person name="Wang Z.-Y."/>
            <person name="Wassarman D.A."/>
            <person name="Weinstock G.M."/>
            <person name="Weissenbach J."/>
            <person name="Williams S.M."/>
            <person name="Woodage T."/>
            <person name="Worley K.C."/>
            <person name="Wu D."/>
            <person name="Yang S."/>
            <person name="Yao Q.A."/>
            <person name="Ye J."/>
            <person name="Yeh R.-F."/>
            <person name="Zaveri J.S."/>
            <person name="Zhan M."/>
            <person name="Zhang G."/>
            <person name="Zhao Q."/>
            <person name="Zheng L."/>
            <person name="Zheng X.H."/>
            <person name="Zhong F.N."/>
            <person name="Zhong W."/>
            <person name="Zhou X."/>
            <person name="Zhu S.C."/>
            <person name="Zhu X."/>
            <person name="Smith H.O."/>
            <person name="Gibbs R.A."/>
            <person name="Myers E.W."/>
            <person name="Rubin G.M."/>
            <person name="Venter J.C."/>
        </authorList>
    </citation>
    <scope>NUCLEOTIDE SEQUENCE [LARGE SCALE GENOMIC DNA]</scope>
    <source>
        <strain>Berkeley</strain>
    </source>
</reference>
<reference key="2">
    <citation type="journal article" date="2002" name="Genome Biol.">
        <title>Annotation of the Drosophila melanogaster euchromatic genome: a systematic review.</title>
        <authorList>
            <person name="Misra S."/>
            <person name="Crosby M.A."/>
            <person name="Mungall C.J."/>
            <person name="Matthews B.B."/>
            <person name="Campbell K.S."/>
            <person name="Hradecky P."/>
            <person name="Huang Y."/>
            <person name="Kaminker J.S."/>
            <person name="Millburn G.H."/>
            <person name="Prochnik S.E."/>
            <person name="Smith C.D."/>
            <person name="Tupy J.L."/>
            <person name="Whitfield E.J."/>
            <person name="Bayraktaroglu L."/>
            <person name="Berman B.P."/>
            <person name="Bettencourt B.R."/>
            <person name="Celniker S.E."/>
            <person name="de Grey A.D.N.J."/>
            <person name="Drysdale R.A."/>
            <person name="Harris N.L."/>
            <person name="Richter J."/>
            <person name="Russo S."/>
            <person name="Schroeder A.J."/>
            <person name="Shu S.Q."/>
            <person name="Stapleton M."/>
            <person name="Yamada C."/>
            <person name="Ashburner M."/>
            <person name="Gelbart W.M."/>
            <person name="Rubin G.M."/>
            <person name="Lewis S.E."/>
        </authorList>
    </citation>
    <scope>GENOME REANNOTATION</scope>
    <source>
        <strain>Berkeley</strain>
    </source>
</reference>
<reference key="3">
    <citation type="journal article" date="2002" name="Genome Biol.">
        <title>A Drosophila full-length cDNA resource.</title>
        <authorList>
            <person name="Stapleton M."/>
            <person name="Carlson J.W."/>
            <person name="Brokstein P."/>
            <person name="Yu C."/>
            <person name="Champe M."/>
            <person name="George R.A."/>
            <person name="Guarin H."/>
            <person name="Kronmiller B."/>
            <person name="Pacleb J.M."/>
            <person name="Park S."/>
            <person name="Wan K.H."/>
            <person name="Rubin G.M."/>
            <person name="Celniker S.E."/>
        </authorList>
    </citation>
    <scope>NUCLEOTIDE SEQUENCE [LARGE SCALE MRNA]</scope>
    <source>
        <strain>Berkeley</strain>
        <tissue>Head</tissue>
    </source>
</reference>